<accession>C5CES8</accession>
<gene>
    <name evidence="1" type="primary">ftsH</name>
    <name type="ordered locus">Kole_1568</name>
</gene>
<reference key="1">
    <citation type="submission" date="2009-06" db="EMBL/GenBank/DDBJ databases">
        <title>Complete sequence of Thermotogales bacterium TBF 19.5.1.</title>
        <authorList>
            <consortium name="US DOE Joint Genome Institute"/>
            <person name="Lucas S."/>
            <person name="Copeland A."/>
            <person name="Lapidus A."/>
            <person name="Glavina del Rio T."/>
            <person name="Tice H."/>
            <person name="Bruce D."/>
            <person name="Goodwin L."/>
            <person name="Pitluck S."/>
            <person name="Chertkov O."/>
            <person name="Brettin T."/>
            <person name="Detter J.C."/>
            <person name="Han C."/>
            <person name="Schmutz J."/>
            <person name="Larimer F."/>
            <person name="Land M."/>
            <person name="Hauser L."/>
            <person name="Kyrpides N."/>
            <person name="Ovchinnikova G."/>
            <person name="Noll K."/>
        </authorList>
    </citation>
    <scope>NUCLEOTIDE SEQUENCE [LARGE SCALE GENOMIC DNA]</scope>
    <source>
        <strain>ATCC BAA-1733 / DSM 21960 / TBF 19.5.1</strain>
    </source>
</reference>
<organism>
    <name type="scientific">Kosmotoga olearia (strain ATCC BAA-1733 / DSM 21960 / TBF 19.5.1)</name>
    <dbReference type="NCBI Taxonomy" id="521045"/>
    <lineage>
        <taxon>Bacteria</taxon>
        <taxon>Thermotogati</taxon>
        <taxon>Thermotogota</taxon>
        <taxon>Thermotogae</taxon>
        <taxon>Kosmotogales</taxon>
        <taxon>Kosmotogaceae</taxon>
        <taxon>Kosmotoga</taxon>
    </lineage>
</organism>
<protein>
    <recommendedName>
        <fullName evidence="1">ATP-dependent zinc metalloprotease FtsH</fullName>
        <ecNumber evidence="1">3.4.24.-</ecNumber>
    </recommendedName>
</protein>
<comment type="function">
    <text evidence="1">Acts as a processive, ATP-dependent zinc metallopeptidase for both cytoplasmic and membrane proteins. Plays a role in the quality control of integral membrane proteins.</text>
</comment>
<comment type="cofactor">
    <cofactor evidence="1">
        <name>Zn(2+)</name>
        <dbReference type="ChEBI" id="CHEBI:29105"/>
    </cofactor>
    <text evidence="1">Binds 1 zinc ion per subunit.</text>
</comment>
<comment type="subunit">
    <text evidence="1">Homohexamer.</text>
</comment>
<comment type="subcellular location">
    <subcellularLocation>
        <location evidence="1">Cell inner membrane</location>
        <topology evidence="1">Multi-pass membrane protein</topology>
        <orientation evidence="1">Cytoplasmic side</orientation>
    </subcellularLocation>
</comment>
<comment type="similarity">
    <text evidence="1">In the central section; belongs to the AAA ATPase family.</text>
</comment>
<comment type="similarity">
    <text evidence="1">In the C-terminal section; belongs to the peptidase M41 family.</text>
</comment>
<keyword id="KW-0067">ATP-binding</keyword>
<keyword id="KW-0997">Cell inner membrane</keyword>
<keyword id="KW-1003">Cell membrane</keyword>
<keyword id="KW-0378">Hydrolase</keyword>
<keyword id="KW-0472">Membrane</keyword>
<keyword id="KW-0479">Metal-binding</keyword>
<keyword id="KW-0482">Metalloprotease</keyword>
<keyword id="KW-0547">Nucleotide-binding</keyword>
<keyword id="KW-0645">Protease</keyword>
<keyword id="KW-1185">Reference proteome</keyword>
<keyword id="KW-0812">Transmembrane</keyword>
<keyword id="KW-1133">Transmembrane helix</keyword>
<keyword id="KW-0862">Zinc</keyword>
<name>FTSH_KOSOT</name>
<dbReference type="EC" id="3.4.24.-" evidence="1"/>
<dbReference type="EMBL" id="CP001634">
    <property type="protein sequence ID" value="ACR80258.1"/>
    <property type="molecule type" value="Genomic_DNA"/>
</dbReference>
<dbReference type="RefSeq" id="WP_015868903.1">
    <property type="nucleotide sequence ID" value="NC_012785.1"/>
</dbReference>
<dbReference type="SMR" id="C5CES8"/>
<dbReference type="STRING" id="521045.Kole_1568"/>
<dbReference type="MEROPS" id="M41.021"/>
<dbReference type="KEGG" id="kol:Kole_1568"/>
<dbReference type="eggNOG" id="COG0465">
    <property type="taxonomic scope" value="Bacteria"/>
</dbReference>
<dbReference type="HOGENOM" id="CLU_000688_16_2_0"/>
<dbReference type="OrthoDB" id="9809379at2"/>
<dbReference type="Proteomes" id="UP000002382">
    <property type="component" value="Chromosome"/>
</dbReference>
<dbReference type="GO" id="GO:0005886">
    <property type="term" value="C:plasma membrane"/>
    <property type="evidence" value="ECO:0007669"/>
    <property type="project" value="UniProtKB-SubCell"/>
</dbReference>
<dbReference type="GO" id="GO:0005524">
    <property type="term" value="F:ATP binding"/>
    <property type="evidence" value="ECO:0007669"/>
    <property type="project" value="UniProtKB-UniRule"/>
</dbReference>
<dbReference type="GO" id="GO:0016887">
    <property type="term" value="F:ATP hydrolysis activity"/>
    <property type="evidence" value="ECO:0007669"/>
    <property type="project" value="UniProtKB-UniRule"/>
</dbReference>
<dbReference type="GO" id="GO:0004176">
    <property type="term" value="F:ATP-dependent peptidase activity"/>
    <property type="evidence" value="ECO:0007669"/>
    <property type="project" value="InterPro"/>
</dbReference>
<dbReference type="GO" id="GO:0004222">
    <property type="term" value="F:metalloendopeptidase activity"/>
    <property type="evidence" value="ECO:0007669"/>
    <property type="project" value="InterPro"/>
</dbReference>
<dbReference type="GO" id="GO:0008270">
    <property type="term" value="F:zinc ion binding"/>
    <property type="evidence" value="ECO:0007669"/>
    <property type="project" value="UniProtKB-UniRule"/>
</dbReference>
<dbReference type="GO" id="GO:0030163">
    <property type="term" value="P:protein catabolic process"/>
    <property type="evidence" value="ECO:0007669"/>
    <property type="project" value="UniProtKB-UniRule"/>
</dbReference>
<dbReference type="GO" id="GO:0006508">
    <property type="term" value="P:proteolysis"/>
    <property type="evidence" value="ECO:0007669"/>
    <property type="project" value="UniProtKB-KW"/>
</dbReference>
<dbReference type="CDD" id="cd19501">
    <property type="entry name" value="RecA-like_FtsH"/>
    <property type="match status" value="1"/>
</dbReference>
<dbReference type="FunFam" id="1.10.8.60:FF:000001">
    <property type="entry name" value="ATP-dependent zinc metalloprotease FtsH"/>
    <property type="match status" value="1"/>
</dbReference>
<dbReference type="FunFam" id="1.20.58.760:FF:000001">
    <property type="entry name" value="ATP-dependent zinc metalloprotease FtsH"/>
    <property type="match status" value="1"/>
</dbReference>
<dbReference type="FunFam" id="3.40.50.300:FF:000001">
    <property type="entry name" value="ATP-dependent zinc metalloprotease FtsH"/>
    <property type="match status" value="1"/>
</dbReference>
<dbReference type="Gene3D" id="1.10.8.60">
    <property type="match status" value="1"/>
</dbReference>
<dbReference type="Gene3D" id="3.40.50.300">
    <property type="entry name" value="P-loop containing nucleotide triphosphate hydrolases"/>
    <property type="match status" value="1"/>
</dbReference>
<dbReference type="Gene3D" id="1.20.58.760">
    <property type="entry name" value="Peptidase M41"/>
    <property type="match status" value="1"/>
</dbReference>
<dbReference type="HAMAP" id="MF_01458">
    <property type="entry name" value="FtsH"/>
    <property type="match status" value="1"/>
</dbReference>
<dbReference type="InterPro" id="IPR003593">
    <property type="entry name" value="AAA+_ATPase"/>
</dbReference>
<dbReference type="InterPro" id="IPR041569">
    <property type="entry name" value="AAA_lid_3"/>
</dbReference>
<dbReference type="InterPro" id="IPR003959">
    <property type="entry name" value="ATPase_AAA_core"/>
</dbReference>
<dbReference type="InterPro" id="IPR003960">
    <property type="entry name" value="ATPase_AAA_CS"/>
</dbReference>
<dbReference type="InterPro" id="IPR005936">
    <property type="entry name" value="FtsH"/>
</dbReference>
<dbReference type="InterPro" id="IPR027417">
    <property type="entry name" value="P-loop_NTPase"/>
</dbReference>
<dbReference type="InterPro" id="IPR011546">
    <property type="entry name" value="Pept_M41_FtsH_extracell"/>
</dbReference>
<dbReference type="InterPro" id="IPR000642">
    <property type="entry name" value="Peptidase_M41"/>
</dbReference>
<dbReference type="InterPro" id="IPR037219">
    <property type="entry name" value="Peptidase_M41-like"/>
</dbReference>
<dbReference type="NCBIfam" id="TIGR01241">
    <property type="entry name" value="FtsH_fam"/>
    <property type="match status" value="1"/>
</dbReference>
<dbReference type="PANTHER" id="PTHR23076:SF97">
    <property type="entry name" value="ATP-DEPENDENT ZINC METALLOPROTEASE YME1L1"/>
    <property type="match status" value="1"/>
</dbReference>
<dbReference type="PANTHER" id="PTHR23076">
    <property type="entry name" value="METALLOPROTEASE M41 FTSH"/>
    <property type="match status" value="1"/>
</dbReference>
<dbReference type="Pfam" id="PF00004">
    <property type="entry name" value="AAA"/>
    <property type="match status" value="1"/>
</dbReference>
<dbReference type="Pfam" id="PF17862">
    <property type="entry name" value="AAA_lid_3"/>
    <property type="match status" value="1"/>
</dbReference>
<dbReference type="Pfam" id="PF06480">
    <property type="entry name" value="FtsH_ext"/>
    <property type="match status" value="1"/>
</dbReference>
<dbReference type="Pfam" id="PF01434">
    <property type="entry name" value="Peptidase_M41"/>
    <property type="match status" value="1"/>
</dbReference>
<dbReference type="SMART" id="SM00382">
    <property type="entry name" value="AAA"/>
    <property type="match status" value="1"/>
</dbReference>
<dbReference type="SUPFAM" id="SSF140990">
    <property type="entry name" value="FtsH protease domain-like"/>
    <property type="match status" value="1"/>
</dbReference>
<dbReference type="SUPFAM" id="SSF52540">
    <property type="entry name" value="P-loop containing nucleoside triphosphate hydrolases"/>
    <property type="match status" value="1"/>
</dbReference>
<dbReference type="PROSITE" id="PS00674">
    <property type="entry name" value="AAA"/>
    <property type="match status" value="1"/>
</dbReference>
<evidence type="ECO:0000255" key="1">
    <source>
        <dbReference type="HAMAP-Rule" id="MF_01458"/>
    </source>
</evidence>
<evidence type="ECO:0000256" key="2">
    <source>
        <dbReference type="SAM" id="MobiDB-lite"/>
    </source>
</evidence>
<feature type="chain" id="PRO_0000400345" description="ATP-dependent zinc metalloprotease FtsH">
    <location>
        <begin position="1"/>
        <end position="645"/>
    </location>
</feature>
<feature type="topological domain" description="Cytoplasmic" evidence="1">
    <location>
        <begin position="1"/>
        <end position="6"/>
    </location>
</feature>
<feature type="transmembrane region" description="Helical" evidence="1">
    <location>
        <begin position="7"/>
        <end position="27"/>
    </location>
</feature>
<feature type="topological domain" description="Periplasmic" evidence="1">
    <location>
        <begin position="28"/>
        <end position="110"/>
    </location>
</feature>
<feature type="transmembrane region" description="Helical" evidence="1">
    <location>
        <begin position="111"/>
        <end position="131"/>
    </location>
</feature>
<feature type="topological domain" description="Cytoplasmic" evidence="1">
    <location>
        <begin position="132"/>
        <end position="645"/>
    </location>
</feature>
<feature type="region of interest" description="Disordered" evidence="2">
    <location>
        <begin position="623"/>
        <end position="645"/>
    </location>
</feature>
<feature type="compositionally biased region" description="Basic and acidic residues" evidence="2">
    <location>
        <begin position="634"/>
        <end position="645"/>
    </location>
</feature>
<feature type="active site" evidence="1">
    <location>
        <position position="427"/>
    </location>
</feature>
<feature type="binding site" evidence="1">
    <location>
        <begin position="204"/>
        <end position="211"/>
    </location>
    <ligand>
        <name>ATP</name>
        <dbReference type="ChEBI" id="CHEBI:30616"/>
    </ligand>
</feature>
<feature type="binding site" evidence="1">
    <location>
        <position position="426"/>
    </location>
    <ligand>
        <name>Zn(2+)</name>
        <dbReference type="ChEBI" id="CHEBI:29105"/>
        <note>catalytic</note>
    </ligand>
</feature>
<feature type="binding site" evidence="1">
    <location>
        <position position="430"/>
    </location>
    <ligand>
        <name>Zn(2+)</name>
        <dbReference type="ChEBI" id="CHEBI:29105"/>
        <note>catalytic</note>
    </ligand>
</feature>
<feature type="binding site" evidence="1">
    <location>
        <position position="503"/>
    </location>
    <ligand>
        <name>Zn(2+)</name>
        <dbReference type="ChEBI" id="CHEBI:29105"/>
        <note>catalytic</note>
    </ligand>
</feature>
<proteinExistence type="inferred from homology"/>
<sequence>MDQRPKFGMILFYIVLGVFLMVALRGLYTTDTNLSVPYNRFLEDVNDKKIIKIVIYDDGRIVYTTSESSKRSLETKVSPQTLSTDRFQNYIDQLVTDGVNVVYEKGNDSLFWVNLLGTIIPLAIIVFIWFFAMRSLSGRNSQAFTFTKSPAKKYLSNDKNVTFKDVAGVDEAIEELQDAVNYLKNPNAFSQTGARMPKGILLVGPPGTGKTLLARAVAGEANVPFFYISGSDFVELFVGVGAARVRDLFSQAKASAPSIIFIDEIDAVGRHRGAGLGGGHDEREQTLNQILVEMDGFDAKTGVIVMAATNRPDILDHALLRPGRFDKKITVDPPDVKGRAEILKIHMRGKPVDPDVDVWLLARRTPGFVGADLENLVNEAAILAARRKKKIIGMKELEEAIDRVIAGPARKSRIMNPKEKKIVAYHELGHAIVGLALPNAYPVHKVTVIPRGSASLGFTESLPSEDRYLVSRSEMLDNLAQILGGRAAEEIVFGEITTGAANDLERATQMARTMVCQLGMSDRLGPIAWGKEEGEVFLGRELTRMRNYSEEIASEIDNEVKKIVIEAHERARKLVEKFRDKLDKAAEYLIEKETITGKELAEIVGLAESGNYYRDPLAETKGSKRKVSAVSTNEEAKEGNEDEKN</sequence>